<organism>
    <name type="scientific">Nitratiruptor sp. (strain SB155-2)</name>
    <dbReference type="NCBI Taxonomy" id="387092"/>
    <lineage>
        <taxon>Bacteria</taxon>
        <taxon>Pseudomonadati</taxon>
        <taxon>Campylobacterota</taxon>
        <taxon>Epsilonproteobacteria</taxon>
        <taxon>Nautiliales</taxon>
        <taxon>Nitratiruptoraceae</taxon>
        <taxon>Nitratiruptor</taxon>
    </lineage>
</organism>
<gene>
    <name evidence="1" type="primary">nuoK</name>
    <name type="ordered locus">NIS_0299</name>
</gene>
<proteinExistence type="inferred from homology"/>
<name>NUOK_NITSB</name>
<evidence type="ECO:0000255" key="1">
    <source>
        <dbReference type="HAMAP-Rule" id="MF_01456"/>
    </source>
</evidence>
<feature type="chain" id="PRO_0000390144" description="NADH-quinone oxidoreductase subunit K">
    <location>
        <begin position="1"/>
        <end position="100"/>
    </location>
</feature>
<feature type="transmembrane region" description="Helical" evidence="1">
    <location>
        <begin position="2"/>
        <end position="22"/>
    </location>
</feature>
<feature type="transmembrane region" description="Helical" evidence="1">
    <location>
        <begin position="29"/>
        <end position="49"/>
    </location>
</feature>
<feature type="transmembrane region" description="Helical" evidence="1">
    <location>
        <begin position="63"/>
        <end position="83"/>
    </location>
</feature>
<accession>A6Q1Q4</accession>
<comment type="function">
    <text evidence="1">NDH-1 shuttles electrons from NADH, via FMN and iron-sulfur (Fe-S) centers, to quinones in the respiratory chain. The immediate electron acceptor for the enzyme in this species is believed to be ubiquinone. Couples the redox reaction to proton translocation (for every two electrons transferred, four hydrogen ions are translocated across the cytoplasmic membrane), and thus conserves the redox energy in a proton gradient.</text>
</comment>
<comment type="catalytic activity">
    <reaction evidence="1">
        <text>a quinone + NADH + 5 H(+)(in) = a quinol + NAD(+) + 4 H(+)(out)</text>
        <dbReference type="Rhea" id="RHEA:57888"/>
        <dbReference type="ChEBI" id="CHEBI:15378"/>
        <dbReference type="ChEBI" id="CHEBI:24646"/>
        <dbReference type="ChEBI" id="CHEBI:57540"/>
        <dbReference type="ChEBI" id="CHEBI:57945"/>
        <dbReference type="ChEBI" id="CHEBI:132124"/>
    </reaction>
</comment>
<comment type="subunit">
    <text evidence="1">NDH-1 is composed of 14 different subunits. Subunits NuoA, H, J, K, L, M, N constitute the membrane sector of the complex.</text>
</comment>
<comment type="subcellular location">
    <subcellularLocation>
        <location evidence="1">Cell inner membrane</location>
        <topology evidence="1">Multi-pass membrane protein</topology>
    </subcellularLocation>
</comment>
<comment type="similarity">
    <text evidence="1">Belongs to the complex I subunit 4L family.</text>
</comment>
<protein>
    <recommendedName>
        <fullName evidence="1">NADH-quinone oxidoreductase subunit K</fullName>
        <ecNumber evidence="1">7.1.1.-</ecNumber>
    </recommendedName>
    <alternativeName>
        <fullName evidence="1">NADH dehydrogenase I subunit K</fullName>
    </alternativeName>
    <alternativeName>
        <fullName evidence="1">NDH-1 subunit K</fullName>
    </alternativeName>
</protein>
<sequence length="100" mass="10999">MITLTHYLILSAILFSIALVGILRRKNLLMLFFATEIALNAVNIALAAFSKYYGDLTGQLFAFFIIAIAASEVAVGLGLLIIWYKRRGTIDLDSLQSMNG</sequence>
<dbReference type="EC" id="7.1.1.-" evidence="1"/>
<dbReference type="EMBL" id="AP009178">
    <property type="protein sequence ID" value="BAF69413.1"/>
    <property type="molecule type" value="Genomic_DNA"/>
</dbReference>
<dbReference type="RefSeq" id="WP_012081676.1">
    <property type="nucleotide sequence ID" value="NC_009662.1"/>
</dbReference>
<dbReference type="SMR" id="A6Q1Q4"/>
<dbReference type="FunCoup" id="A6Q1Q4">
    <property type="interactions" value="213"/>
</dbReference>
<dbReference type="STRING" id="387092.NIS_0299"/>
<dbReference type="KEGG" id="nis:NIS_0299"/>
<dbReference type="eggNOG" id="COG0713">
    <property type="taxonomic scope" value="Bacteria"/>
</dbReference>
<dbReference type="HOGENOM" id="CLU_144724_0_0_7"/>
<dbReference type="InParanoid" id="A6Q1Q4"/>
<dbReference type="OrthoDB" id="9810120at2"/>
<dbReference type="Proteomes" id="UP000001118">
    <property type="component" value="Chromosome"/>
</dbReference>
<dbReference type="GO" id="GO:0030964">
    <property type="term" value="C:NADH dehydrogenase complex"/>
    <property type="evidence" value="ECO:0007669"/>
    <property type="project" value="TreeGrafter"/>
</dbReference>
<dbReference type="GO" id="GO:0005886">
    <property type="term" value="C:plasma membrane"/>
    <property type="evidence" value="ECO:0007669"/>
    <property type="project" value="UniProtKB-SubCell"/>
</dbReference>
<dbReference type="GO" id="GO:0050136">
    <property type="term" value="F:NADH:ubiquinone reductase (non-electrogenic) activity"/>
    <property type="evidence" value="ECO:0007669"/>
    <property type="project" value="UniProtKB-UniRule"/>
</dbReference>
<dbReference type="GO" id="GO:0048038">
    <property type="term" value="F:quinone binding"/>
    <property type="evidence" value="ECO:0007669"/>
    <property type="project" value="UniProtKB-KW"/>
</dbReference>
<dbReference type="GO" id="GO:0042773">
    <property type="term" value="P:ATP synthesis coupled electron transport"/>
    <property type="evidence" value="ECO:0007669"/>
    <property type="project" value="InterPro"/>
</dbReference>
<dbReference type="FunFam" id="1.10.287.3510:FF:000001">
    <property type="entry name" value="NADH-quinone oxidoreductase subunit K"/>
    <property type="match status" value="1"/>
</dbReference>
<dbReference type="Gene3D" id="1.10.287.3510">
    <property type="match status" value="1"/>
</dbReference>
<dbReference type="HAMAP" id="MF_01456">
    <property type="entry name" value="NDH1_NuoK"/>
    <property type="match status" value="1"/>
</dbReference>
<dbReference type="InterPro" id="IPR001133">
    <property type="entry name" value="NADH_UbQ_OxRdtase_chain4L/K"/>
</dbReference>
<dbReference type="InterPro" id="IPR039428">
    <property type="entry name" value="NUOK/Mnh_C1-like"/>
</dbReference>
<dbReference type="NCBIfam" id="NF004320">
    <property type="entry name" value="PRK05715.1-2"/>
    <property type="match status" value="1"/>
</dbReference>
<dbReference type="NCBIfam" id="NF004321">
    <property type="entry name" value="PRK05715.1-3"/>
    <property type="match status" value="1"/>
</dbReference>
<dbReference type="NCBIfam" id="NF004323">
    <property type="entry name" value="PRK05715.1-5"/>
    <property type="match status" value="1"/>
</dbReference>
<dbReference type="PANTHER" id="PTHR11434:SF21">
    <property type="entry name" value="NADH DEHYDROGENASE SUBUNIT 4L-RELATED"/>
    <property type="match status" value="1"/>
</dbReference>
<dbReference type="PANTHER" id="PTHR11434">
    <property type="entry name" value="NADH-UBIQUINONE OXIDOREDUCTASE SUBUNIT ND4L"/>
    <property type="match status" value="1"/>
</dbReference>
<dbReference type="Pfam" id="PF00420">
    <property type="entry name" value="Oxidored_q2"/>
    <property type="match status" value="1"/>
</dbReference>
<reference key="1">
    <citation type="journal article" date="2007" name="Proc. Natl. Acad. Sci. U.S.A.">
        <title>Deep-sea vent epsilon-proteobacterial genomes provide insights into emergence of pathogens.</title>
        <authorList>
            <person name="Nakagawa S."/>
            <person name="Takaki Y."/>
            <person name="Shimamura S."/>
            <person name="Reysenbach A.-L."/>
            <person name="Takai K."/>
            <person name="Horikoshi K."/>
        </authorList>
    </citation>
    <scope>NUCLEOTIDE SEQUENCE [LARGE SCALE GENOMIC DNA]</scope>
    <source>
        <strain>SB155-2</strain>
    </source>
</reference>
<keyword id="KW-0997">Cell inner membrane</keyword>
<keyword id="KW-1003">Cell membrane</keyword>
<keyword id="KW-0472">Membrane</keyword>
<keyword id="KW-0520">NAD</keyword>
<keyword id="KW-0874">Quinone</keyword>
<keyword id="KW-1185">Reference proteome</keyword>
<keyword id="KW-1278">Translocase</keyword>
<keyword id="KW-0812">Transmembrane</keyword>
<keyword id="KW-1133">Transmembrane helix</keyword>
<keyword id="KW-0813">Transport</keyword>
<keyword id="KW-0830">Ubiquinone</keyword>